<sequence length="281" mass="31197">MIETVTDLSRLRGIVADWRRQGLRVALVPTMGNLHAGHFSLVMLARHYADRVVSSVFVNPTQFGPHEDFRRYPRTPEADMRGLEHVGCDVLWLPSVETMYPLGTERTVRLFVPCVSDVLEGTFRPGHFEGVCTVVARLFNQVLPDVAVFGKKDYQQLVVIRQMVVDLAFPIEILGGCIVRESDGLAMSSRNQYLSMQERPQAAEIHRTLIAMRDAVMSGGVHADVEAEAVRRLEAAGFQVDYAVIRLSDLGEPIDGTVISPGIALVAARLGNTRLIDNLEF</sequence>
<name>PANC_XYLFA</name>
<accession>Q9PGR8</accession>
<reference key="1">
    <citation type="journal article" date="2000" name="Nature">
        <title>The genome sequence of the plant pathogen Xylella fastidiosa.</title>
        <authorList>
            <person name="Simpson A.J.G."/>
            <person name="Reinach F.C."/>
            <person name="Arruda P."/>
            <person name="Abreu F.A."/>
            <person name="Acencio M."/>
            <person name="Alvarenga R."/>
            <person name="Alves L.M.C."/>
            <person name="Araya J.E."/>
            <person name="Baia G.S."/>
            <person name="Baptista C.S."/>
            <person name="Barros M.H."/>
            <person name="Bonaccorsi E.D."/>
            <person name="Bordin S."/>
            <person name="Bove J.M."/>
            <person name="Briones M.R.S."/>
            <person name="Bueno M.R.P."/>
            <person name="Camargo A.A."/>
            <person name="Camargo L.E.A."/>
            <person name="Carraro D.M."/>
            <person name="Carrer H."/>
            <person name="Colauto N.B."/>
            <person name="Colombo C."/>
            <person name="Costa F.F."/>
            <person name="Costa M.C.R."/>
            <person name="Costa-Neto C.M."/>
            <person name="Coutinho L.L."/>
            <person name="Cristofani M."/>
            <person name="Dias-Neto E."/>
            <person name="Docena C."/>
            <person name="El-Dorry H."/>
            <person name="Facincani A.P."/>
            <person name="Ferreira A.J.S."/>
            <person name="Ferreira V.C.A."/>
            <person name="Ferro J.A."/>
            <person name="Fraga J.S."/>
            <person name="Franca S.C."/>
            <person name="Franco M.C."/>
            <person name="Frohme M."/>
            <person name="Furlan L.R."/>
            <person name="Garnier M."/>
            <person name="Goldman G.H."/>
            <person name="Goldman M.H.S."/>
            <person name="Gomes S.L."/>
            <person name="Gruber A."/>
            <person name="Ho P.L."/>
            <person name="Hoheisel J.D."/>
            <person name="Junqueira M.L."/>
            <person name="Kemper E.L."/>
            <person name="Kitajima J.P."/>
            <person name="Krieger J.E."/>
            <person name="Kuramae E.E."/>
            <person name="Laigret F."/>
            <person name="Lambais M.R."/>
            <person name="Leite L.C.C."/>
            <person name="Lemos E.G.M."/>
            <person name="Lemos M.V.F."/>
            <person name="Lopes S.A."/>
            <person name="Lopes C.R."/>
            <person name="Machado J.A."/>
            <person name="Machado M.A."/>
            <person name="Madeira A.M.B.N."/>
            <person name="Madeira H.M.F."/>
            <person name="Marino C.L."/>
            <person name="Marques M.V."/>
            <person name="Martins E.A.L."/>
            <person name="Martins E.M.F."/>
            <person name="Matsukuma A.Y."/>
            <person name="Menck C.F.M."/>
            <person name="Miracca E.C."/>
            <person name="Miyaki C.Y."/>
            <person name="Monteiro-Vitorello C.B."/>
            <person name="Moon D.H."/>
            <person name="Nagai M.A."/>
            <person name="Nascimento A.L.T.O."/>
            <person name="Netto L.E.S."/>
            <person name="Nhani A. Jr."/>
            <person name="Nobrega F.G."/>
            <person name="Nunes L.R."/>
            <person name="Oliveira M.A."/>
            <person name="de Oliveira M.C."/>
            <person name="de Oliveira R.C."/>
            <person name="Palmieri D.A."/>
            <person name="Paris A."/>
            <person name="Peixoto B.R."/>
            <person name="Pereira G.A.G."/>
            <person name="Pereira H.A. Jr."/>
            <person name="Pesquero J.B."/>
            <person name="Quaggio R.B."/>
            <person name="Roberto P.G."/>
            <person name="Rodrigues V."/>
            <person name="de Rosa A.J.M."/>
            <person name="de Rosa V.E. Jr."/>
            <person name="de Sa R.G."/>
            <person name="Santelli R.V."/>
            <person name="Sawasaki H.E."/>
            <person name="da Silva A.C.R."/>
            <person name="da Silva A.M."/>
            <person name="da Silva F.R."/>
            <person name="Silva W.A. Jr."/>
            <person name="da Silveira J.F."/>
            <person name="Silvestri M.L.Z."/>
            <person name="Siqueira W.J."/>
            <person name="de Souza A.A."/>
            <person name="de Souza A.P."/>
            <person name="Terenzi M.F."/>
            <person name="Truffi D."/>
            <person name="Tsai S.M."/>
            <person name="Tsuhako M.H."/>
            <person name="Vallada H."/>
            <person name="Van Sluys M.A."/>
            <person name="Verjovski-Almeida S."/>
            <person name="Vettore A.L."/>
            <person name="Zago M.A."/>
            <person name="Zatz M."/>
            <person name="Meidanis J."/>
            <person name="Setubal J.C."/>
        </authorList>
    </citation>
    <scope>NUCLEOTIDE SEQUENCE [LARGE SCALE GENOMIC DNA]</scope>
    <source>
        <strain>9a5c</strain>
    </source>
</reference>
<comment type="function">
    <text evidence="1">Catalyzes the condensation of pantoate with beta-alanine in an ATP-dependent reaction via a pantoyl-adenylate intermediate.</text>
</comment>
<comment type="catalytic activity">
    <reaction evidence="1">
        <text>(R)-pantoate + beta-alanine + ATP = (R)-pantothenate + AMP + diphosphate + H(+)</text>
        <dbReference type="Rhea" id="RHEA:10912"/>
        <dbReference type="ChEBI" id="CHEBI:15378"/>
        <dbReference type="ChEBI" id="CHEBI:15980"/>
        <dbReference type="ChEBI" id="CHEBI:29032"/>
        <dbReference type="ChEBI" id="CHEBI:30616"/>
        <dbReference type="ChEBI" id="CHEBI:33019"/>
        <dbReference type="ChEBI" id="CHEBI:57966"/>
        <dbReference type="ChEBI" id="CHEBI:456215"/>
        <dbReference type="EC" id="6.3.2.1"/>
    </reaction>
</comment>
<comment type="pathway">
    <text evidence="1">Cofactor biosynthesis; (R)-pantothenate biosynthesis; (R)-pantothenate from (R)-pantoate and beta-alanine: step 1/1.</text>
</comment>
<comment type="subunit">
    <text evidence="1">Homodimer.</text>
</comment>
<comment type="subcellular location">
    <subcellularLocation>
        <location evidence="1">Cytoplasm</location>
    </subcellularLocation>
</comment>
<comment type="miscellaneous">
    <text evidence="1">The reaction proceeds by a bi uni uni bi ping pong mechanism.</text>
</comment>
<comment type="similarity">
    <text evidence="1">Belongs to the pantothenate synthetase family.</text>
</comment>
<proteinExistence type="inferred from homology"/>
<organism>
    <name type="scientific">Xylella fastidiosa (strain 9a5c)</name>
    <dbReference type="NCBI Taxonomy" id="160492"/>
    <lineage>
        <taxon>Bacteria</taxon>
        <taxon>Pseudomonadati</taxon>
        <taxon>Pseudomonadota</taxon>
        <taxon>Gammaproteobacteria</taxon>
        <taxon>Lysobacterales</taxon>
        <taxon>Lysobacteraceae</taxon>
        <taxon>Xylella</taxon>
    </lineage>
</organism>
<keyword id="KW-0067">ATP-binding</keyword>
<keyword id="KW-0963">Cytoplasm</keyword>
<keyword id="KW-0436">Ligase</keyword>
<keyword id="KW-0547">Nucleotide-binding</keyword>
<keyword id="KW-0566">Pantothenate biosynthesis</keyword>
<evidence type="ECO:0000255" key="1">
    <source>
        <dbReference type="HAMAP-Rule" id="MF_00158"/>
    </source>
</evidence>
<feature type="chain" id="PRO_0000128293" description="Pantothenate synthetase">
    <location>
        <begin position="1"/>
        <end position="281"/>
    </location>
</feature>
<feature type="active site" description="Proton donor" evidence="1">
    <location>
        <position position="38"/>
    </location>
</feature>
<feature type="binding site" evidence="1">
    <location>
        <begin position="31"/>
        <end position="38"/>
    </location>
    <ligand>
        <name>ATP</name>
        <dbReference type="ChEBI" id="CHEBI:30616"/>
    </ligand>
</feature>
<feature type="binding site" evidence="1">
    <location>
        <position position="62"/>
    </location>
    <ligand>
        <name>(R)-pantoate</name>
        <dbReference type="ChEBI" id="CHEBI:15980"/>
    </ligand>
</feature>
<feature type="binding site" evidence="1">
    <location>
        <position position="62"/>
    </location>
    <ligand>
        <name>beta-alanine</name>
        <dbReference type="ChEBI" id="CHEBI:57966"/>
    </ligand>
</feature>
<feature type="binding site" evidence="1">
    <location>
        <begin position="150"/>
        <end position="153"/>
    </location>
    <ligand>
        <name>ATP</name>
        <dbReference type="ChEBI" id="CHEBI:30616"/>
    </ligand>
</feature>
<feature type="binding site" evidence="1">
    <location>
        <position position="156"/>
    </location>
    <ligand>
        <name>(R)-pantoate</name>
        <dbReference type="ChEBI" id="CHEBI:15980"/>
    </ligand>
</feature>
<feature type="binding site" evidence="1">
    <location>
        <position position="179"/>
    </location>
    <ligand>
        <name>ATP</name>
        <dbReference type="ChEBI" id="CHEBI:30616"/>
    </ligand>
</feature>
<feature type="binding site" evidence="1">
    <location>
        <begin position="187"/>
        <end position="190"/>
    </location>
    <ligand>
        <name>ATP</name>
        <dbReference type="ChEBI" id="CHEBI:30616"/>
    </ligand>
</feature>
<dbReference type="EC" id="6.3.2.1" evidence="1"/>
<dbReference type="EMBL" id="AE003849">
    <property type="protein sequence ID" value="AAF83043.1"/>
    <property type="molecule type" value="Genomic_DNA"/>
</dbReference>
<dbReference type="PIR" id="F82832">
    <property type="entry name" value="F82832"/>
</dbReference>
<dbReference type="RefSeq" id="WP_010892771.1">
    <property type="nucleotide sequence ID" value="NC_002488.3"/>
</dbReference>
<dbReference type="SMR" id="Q9PGR8"/>
<dbReference type="STRING" id="160492.XF_0230"/>
<dbReference type="KEGG" id="xfa:XF_0230"/>
<dbReference type="eggNOG" id="COG0414">
    <property type="taxonomic scope" value="Bacteria"/>
</dbReference>
<dbReference type="HOGENOM" id="CLU_047148_0_0_6"/>
<dbReference type="UniPathway" id="UPA00028">
    <property type="reaction ID" value="UER00005"/>
</dbReference>
<dbReference type="Proteomes" id="UP000000812">
    <property type="component" value="Chromosome"/>
</dbReference>
<dbReference type="GO" id="GO:0005829">
    <property type="term" value="C:cytosol"/>
    <property type="evidence" value="ECO:0007669"/>
    <property type="project" value="TreeGrafter"/>
</dbReference>
<dbReference type="GO" id="GO:0005524">
    <property type="term" value="F:ATP binding"/>
    <property type="evidence" value="ECO:0007669"/>
    <property type="project" value="UniProtKB-KW"/>
</dbReference>
<dbReference type="GO" id="GO:0004592">
    <property type="term" value="F:pantoate-beta-alanine ligase activity"/>
    <property type="evidence" value="ECO:0007669"/>
    <property type="project" value="UniProtKB-UniRule"/>
</dbReference>
<dbReference type="GO" id="GO:0015940">
    <property type="term" value="P:pantothenate biosynthetic process"/>
    <property type="evidence" value="ECO:0007669"/>
    <property type="project" value="UniProtKB-UniRule"/>
</dbReference>
<dbReference type="CDD" id="cd00560">
    <property type="entry name" value="PanC"/>
    <property type="match status" value="1"/>
</dbReference>
<dbReference type="FunFam" id="3.40.50.620:FF:000114">
    <property type="entry name" value="Pantothenate synthetase"/>
    <property type="match status" value="1"/>
</dbReference>
<dbReference type="Gene3D" id="3.40.50.620">
    <property type="entry name" value="HUPs"/>
    <property type="match status" value="1"/>
</dbReference>
<dbReference type="Gene3D" id="3.30.1300.10">
    <property type="entry name" value="Pantoate-beta-alanine ligase, C-terminal domain"/>
    <property type="match status" value="1"/>
</dbReference>
<dbReference type="HAMAP" id="MF_00158">
    <property type="entry name" value="PanC"/>
    <property type="match status" value="1"/>
</dbReference>
<dbReference type="InterPro" id="IPR003721">
    <property type="entry name" value="Pantoate_ligase"/>
</dbReference>
<dbReference type="InterPro" id="IPR042176">
    <property type="entry name" value="Pantoate_ligase_C"/>
</dbReference>
<dbReference type="InterPro" id="IPR014729">
    <property type="entry name" value="Rossmann-like_a/b/a_fold"/>
</dbReference>
<dbReference type="NCBIfam" id="TIGR00018">
    <property type="entry name" value="panC"/>
    <property type="match status" value="1"/>
</dbReference>
<dbReference type="PANTHER" id="PTHR21299">
    <property type="entry name" value="CYTIDYLATE KINASE/PANTOATE-BETA-ALANINE LIGASE"/>
    <property type="match status" value="1"/>
</dbReference>
<dbReference type="PANTHER" id="PTHR21299:SF1">
    <property type="entry name" value="PANTOATE--BETA-ALANINE LIGASE"/>
    <property type="match status" value="1"/>
</dbReference>
<dbReference type="Pfam" id="PF02569">
    <property type="entry name" value="Pantoate_ligase"/>
    <property type="match status" value="1"/>
</dbReference>
<dbReference type="SUPFAM" id="SSF52374">
    <property type="entry name" value="Nucleotidylyl transferase"/>
    <property type="match status" value="1"/>
</dbReference>
<protein>
    <recommendedName>
        <fullName evidence="1">Pantothenate synthetase</fullName>
        <shortName evidence="1">PS</shortName>
        <ecNumber evidence="1">6.3.2.1</ecNumber>
    </recommendedName>
    <alternativeName>
        <fullName evidence="1">Pantoate--beta-alanine ligase</fullName>
    </alternativeName>
    <alternativeName>
        <fullName evidence="1">Pantoate-activating enzyme</fullName>
    </alternativeName>
</protein>
<gene>
    <name evidence="1" type="primary">panC</name>
    <name type="ordered locus">XF_0230</name>
</gene>